<comment type="function">
    <text evidence="1 2 3 4">Distributive alpha-N-methyltransferase that methylates the N-terminus of target proteins containing the N-terminal motif [Ala/Gly/Pro/Ser]-Pro-Lys when the initiator Met is cleaved. Specifically catalyzes mono-, di- or tri-methylation of the exposed alpha-amino group of the Ala, Gly or Ser residue in the [Ala/Gly/Ser]-Pro-Lys motif and mono- or di-methylation of Pro in the Pro-Pro-Lys motif. Some of the substrates may be primed by NTMT2-mediated monomethylation (PubMed:24090352). Catalyzes the trimethylation of the N-terminal Gly in CENPA (after removal of Met-1). Responsible for the N-terminal methylation of KLHL31, MYL2, MYL3, RB1, RCC1, RPL23A and SET. Required during mitosis for normal bipolar spindle formation and chromosome segregation via its action on RCC1.</text>
</comment>
<comment type="catalytic activity">
    <reaction evidence="2 4">
        <text>N-terminal L-alanyl-L-prolyl-L-lysyl-[protein] + 3 S-adenosyl-L-methionine = N-terminal N,N,N-trimethyl-L-alanyl-L-prolyl-L-lysyl-[protein] + 3 S-adenosyl-L-homocysteine + 3 H(+)</text>
        <dbReference type="Rhea" id="RHEA:54712"/>
        <dbReference type="Rhea" id="RHEA-COMP:13785"/>
        <dbReference type="Rhea" id="RHEA-COMP:13971"/>
        <dbReference type="ChEBI" id="CHEBI:15378"/>
        <dbReference type="ChEBI" id="CHEBI:57856"/>
        <dbReference type="ChEBI" id="CHEBI:59789"/>
        <dbReference type="ChEBI" id="CHEBI:138057"/>
        <dbReference type="ChEBI" id="CHEBI:138315"/>
        <dbReference type="EC" id="2.1.1.244"/>
    </reaction>
</comment>
<comment type="catalytic activity">
    <reaction evidence="2 4">
        <text>N-terminal L-seryl-L-prolyl-L-lysyl-[protein] + 3 S-adenosyl-L-methionine = N-terminal N,N,N-trimethyl-L-seryl-L-prolyl-L-lysyl-[protein] + 3 S-adenosyl-L-homocysteine + 3 H(+)</text>
        <dbReference type="Rhea" id="RHEA:54724"/>
        <dbReference type="Rhea" id="RHEA-COMP:13789"/>
        <dbReference type="Rhea" id="RHEA-COMP:13973"/>
        <dbReference type="ChEBI" id="CHEBI:15378"/>
        <dbReference type="ChEBI" id="CHEBI:57856"/>
        <dbReference type="ChEBI" id="CHEBI:59789"/>
        <dbReference type="ChEBI" id="CHEBI:138061"/>
        <dbReference type="ChEBI" id="CHEBI:138317"/>
        <dbReference type="EC" id="2.1.1.244"/>
    </reaction>
</comment>
<comment type="catalytic activity">
    <reaction evidence="2 4">
        <text>N-terminal L-prolyl-L-prolyl-L-lysyl-[protein] + 2 S-adenosyl-L-methionine = N-terminal N,N-dimethyl-L-prolyl-L-prolyl-L-lysyl-[protein] + 2 S-adenosyl-L-homocysteine + 2 H(+)</text>
        <dbReference type="Rhea" id="RHEA:54736"/>
        <dbReference type="Rhea" id="RHEA-COMP:13787"/>
        <dbReference type="Rhea" id="RHEA-COMP:13974"/>
        <dbReference type="ChEBI" id="CHEBI:15378"/>
        <dbReference type="ChEBI" id="CHEBI:57856"/>
        <dbReference type="ChEBI" id="CHEBI:59789"/>
        <dbReference type="ChEBI" id="CHEBI:138059"/>
        <dbReference type="ChEBI" id="CHEBI:138318"/>
        <dbReference type="EC" id="2.1.1.244"/>
    </reaction>
</comment>
<comment type="interaction">
    <interactant intactId="EBI-373016">
        <id>Q9BV86</id>
    </interactant>
    <interactant intactId="EBI-12143817">
        <id>Q49A26-4</id>
        <label>GLYR1</label>
    </interactant>
    <organismsDiffer>false</organismsDiffer>
    <experiments>3</experiments>
</comment>
<comment type="interaction">
    <interactant intactId="EBI-373016">
        <id>Q9BV86</id>
    </interactant>
    <interactant intactId="EBI-992720">
        <id>P18754</id>
        <label>RCC1</label>
    </interactant>
    <organismsDiffer>false</organismsDiffer>
    <experiments>4</experiments>
</comment>
<comment type="subcellular location">
    <subcellularLocation>
        <location evidence="2 3">Nucleus</location>
    </subcellularLocation>
    <text>Predominantly nuclear (PubMed:24090352).</text>
</comment>
<comment type="alternative products">
    <event type="alternative splicing"/>
    <isoform>
        <id>Q9BV86-1</id>
        <name>1</name>
        <sequence type="displayed"/>
    </isoform>
    <isoform>
        <id>Q9BV86-2</id>
        <name>2</name>
        <sequence type="described" ref="VSP_039886"/>
    </isoform>
</comment>
<comment type="similarity">
    <text evidence="8">Belongs to the methyltransferase superfamily. NTM1 family.</text>
</comment>
<dbReference type="EC" id="2.1.1.244" evidence="2"/>
<dbReference type="EMBL" id="AF110776">
    <property type="protein sequence ID" value="AAF14859.1"/>
    <property type="molecule type" value="mRNA"/>
</dbReference>
<dbReference type="EMBL" id="AK290957">
    <property type="protein sequence ID" value="BAF83646.1"/>
    <property type="molecule type" value="mRNA"/>
</dbReference>
<dbReference type="EMBL" id="AK292332">
    <property type="protein sequence ID" value="BAF85021.1"/>
    <property type="molecule type" value="mRNA"/>
</dbReference>
<dbReference type="EMBL" id="AK298840">
    <property type="protein sequence ID" value="BAG60968.1"/>
    <property type="molecule type" value="mRNA"/>
</dbReference>
<dbReference type="EMBL" id="AL590369">
    <property type="status" value="NOT_ANNOTATED_CDS"/>
    <property type="molecule type" value="Genomic_DNA"/>
</dbReference>
<dbReference type="EMBL" id="BC001396">
    <property type="protein sequence ID" value="AAH01396.1"/>
    <property type="molecule type" value="mRNA"/>
</dbReference>
<dbReference type="EMBL" id="BC033234">
    <property type="protein sequence ID" value="AAH33234.1"/>
    <property type="molecule type" value="mRNA"/>
</dbReference>
<dbReference type="CCDS" id="CCDS35160.1">
    <molecule id="Q9BV86-1"/>
</dbReference>
<dbReference type="CCDS" id="CCDS69682.1">
    <molecule id="Q9BV86-2"/>
</dbReference>
<dbReference type="RefSeq" id="NP_001273725.1">
    <molecule id="Q9BV86-1"/>
    <property type="nucleotide sequence ID" value="NM_001286796.2"/>
</dbReference>
<dbReference type="RefSeq" id="NP_001273726.1">
    <molecule id="Q9BV86-1"/>
    <property type="nucleotide sequence ID" value="NM_001286797.2"/>
</dbReference>
<dbReference type="RefSeq" id="NP_001273727.1">
    <molecule id="Q9BV86-1"/>
    <property type="nucleotide sequence ID" value="NM_001286798.2"/>
</dbReference>
<dbReference type="RefSeq" id="NP_001273728.1">
    <molecule id="Q9BV86-1"/>
    <property type="nucleotide sequence ID" value="NM_001286799.2"/>
</dbReference>
<dbReference type="RefSeq" id="NP_001273729.1">
    <molecule id="Q9BV86-2"/>
    <property type="nucleotide sequence ID" value="NM_001286800.2"/>
</dbReference>
<dbReference type="RefSeq" id="NP_001273730.1">
    <molecule id="Q9BV86-2"/>
    <property type="nucleotide sequence ID" value="NM_001286801.2"/>
</dbReference>
<dbReference type="RefSeq" id="NP_001273731.1">
    <property type="nucleotide sequence ID" value="NM_001286802.1"/>
</dbReference>
<dbReference type="RefSeq" id="NP_001273732.1">
    <property type="nucleotide sequence ID" value="NM_001286803.1"/>
</dbReference>
<dbReference type="RefSeq" id="NP_054783.2">
    <molecule id="Q9BV86-1"/>
    <property type="nucleotide sequence ID" value="NM_014064.4"/>
</dbReference>
<dbReference type="RefSeq" id="XP_047279213.1">
    <molecule id="Q9BV86-1"/>
    <property type="nucleotide sequence ID" value="XM_047423257.1"/>
</dbReference>
<dbReference type="RefSeq" id="XP_047279214.1">
    <molecule id="Q9BV86-1"/>
    <property type="nucleotide sequence ID" value="XM_047423258.1"/>
</dbReference>
<dbReference type="RefSeq" id="XP_047279215.1">
    <molecule id="Q9BV86-2"/>
    <property type="nucleotide sequence ID" value="XM_047423259.1"/>
</dbReference>
<dbReference type="RefSeq" id="XP_047279216.1">
    <molecule id="Q9BV86-2"/>
    <property type="nucleotide sequence ID" value="XM_047423260.1"/>
</dbReference>
<dbReference type="RefSeq" id="XP_054218776.1">
    <molecule id="Q9BV86-1"/>
    <property type="nucleotide sequence ID" value="XM_054362801.1"/>
</dbReference>
<dbReference type="RefSeq" id="XP_054218777.1">
    <molecule id="Q9BV86-1"/>
    <property type="nucleotide sequence ID" value="XM_054362802.1"/>
</dbReference>
<dbReference type="RefSeq" id="XP_054218778.1">
    <molecule id="Q9BV86-2"/>
    <property type="nucleotide sequence ID" value="XM_054362803.1"/>
</dbReference>
<dbReference type="RefSeq" id="XP_054218779.1">
    <molecule id="Q9BV86-2"/>
    <property type="nucleotide sequence ID" value="XM_054362804.1"/>
</dbReference>
<dbReference type="PDB" id="2EX4">
    <property type="method" value="X-ray"/>
    <property type="resolution" value="1.75 A"/>
    <property type="chains" value="A/B=2-222"/>
</dbReference>
<dbReference type="PDB" id="5CVD">
    <property type="method" value="X-ray"/>
    <property type="resolution" value="1.30 A"/>
    <property type="chains" value="A/B=1-223"/>
</dbReference>
<dbReference type="PDB" id="5CVE">
    <property type="method" value="X-ray"/>
    <property type="resolution" value="1.50 A"/>
    <property type="chains" value="A/B=1-223"/>
</dbReference>
<dbReference type="PDB" id="5E1B">
    <property type="method" value="X-ray"/>
    <property type="resolution" value="1.65 A"/>
    <property type="chains" value="A/B=2-223"/>
</dbReference>
<dbReference type="PDB" id="5E1D">
    <property type="method" value="X-ray"/>
    <property type="resolution" value="1.45 A"/>
    <property type="chains" value="A/B=2-223"/>
</dbReference>
<dbReference type="PDB" id="5E1M">
    <property type="method" value="X-ray"/>
    <property type="resolution" value="1.75 A"/>
    <property type="chains" value="A/B=2-223"/>
</dbReference>
<dbReference type="PDB" id="5E1O">
    <property type="method" value="X-ray"/>
    <property type="resolution" value="2.00 A"/>
    <property type="chains" value="A/B=2-223"/>
</dbReference>
<dbReference type="PDB" id="5E2A">
    <property type="method" value="X-ray"/>
    <property type="resolution" value="1.75 A"/>
    <property type="chains" value="A/B=2-223"/>
</dbReference>
<dbReference type="PDB" id="5E2B">
    <property type="method" value="X-ray"/>
    <property type="resolution" value="1.95 A"/>
    <property type="chains" value="A/B=2-223"/>
</dbReference>
<dbReference type="PDB" id="6DTN">
    <property type="method" value="X-ray"/>
    <property type="resolution" value="1.48 A"/>
    <property type="chains" value="B=2-223"/>
</dbReference>
<dbReference type="PDB" id="6KDQ">
    <property type="method" value="X-ray"/>
    <property type="resolution" value="1.50 A"/>
    <property type="chains" value="A/B=1-223"/>
</dbReference>
<dbReference type="PDB" id="6PVA">
    <property type="method" value="X-ray"/>
    <property type="resolution" value="1.84 A"/>
    <property type="chains" value="B=2-223"/>
</dbReference>
<dbReference type="PDB" id="6PVB">
    <property type="method" value="X-ray"/>
    <property type="resolution" value="1.50 A"/>
    <property type="chains" value="B=2-223"/>
</dbReference>
<dbReference type="PDB" id="6WH8">
    <property type="method" value="X-ray"/>
    <property type="resolution" value="1.73 A"/>
    <property type="chains" value="A/B=2-223"/>
</dbReference>
<dbReference type="PDB" id="6WJ7">
    <property type="method" value="X-ray"/>
    <property type="resolution" value="1.42 A"/>
    <property type="chains" value="B=2-223"/>
</dbReference>
<dbReference type="PDB" id="7K3D">
    <property type="method" value="X-ray"/>
    <property type="resolution" value="2.34 A"/>
    <property type="chains" value="A/B=2-223"/>
</dbReference>
<dbReference type="PDB" id="7SS1">
    <property type="method" value="X-ray"/>
    <property type="resolution" value="2.40 A"/>
    <property type="chains" value="A/B=2-223"/>
</dbReference>
<dbReference type="PDB" id="7U1M">
    <property type="method" value="X-ray"/>
    <property type="resolution" value="3.17 A"/>
    <property type="chains" value="A/B=2-223"/>
</dbReference>
<dbReference type="PDBsum" id="2EX4"/>
<dbReference type="PDBsum" id="5CVD"/>
<dbReference type="PDBsum" id="5CVE"/>
<dbReference type="PDBsum" id="5E1B"/>
<dbReference type="PDBsum" id="5E1D"/>
<dbReference type="PDBsum" id="5E1M"/>
<dbReference type="PDBsum" id="5E1O"/>
<dbReference type="PDBsum" id="5E2A"/>
<dbReference type="PDBsum" id="5E2B"/>
<dbReference type="PDBsum" id="6DTN"/>
<dbReference type="PDBsum" id="6KDQ"/>
<dbReference type="PDBsum" id="6PVA"/>
<dbReference type="PDBsum" id="6PVB"/>
<dbReference type="PDBsum" id="6WH8"/>
<dbReference type="PDBsum" id="6WJ7"/>
<dbReference type="PDBsum" id="7K3D"/>
<dbReference type="PDBsum" id="7SS1"/>
<dbReference type="PDBsum" id="7U1M"/>
<dbReference type="SMR" id="Q9BV86"/>
<dbReference type="BioGRID" id="118810">
    <property type="interactions" value="72"/>
</dbReference>
<dbReference type="DIP" id="DIP-31241N"/>
<dbReference type="FunCoup" id="Q9BV86">
    <property type="interactions" value="2918"/>
</dbReference>
<dbReference type="IntAct" id="Q9BV86">
    <property type="interactions" value="22"/>
</dbReference>
<dbReference type="STRING" id="9606.ENSP00000483489"/>
<dbReference type="BindingDB" id="Q9BV86"/>
<dbReference type="ChEMBL" id="CHEMBL4523442"/>
<dbReference type="GlyGen" id="Q9BV86">
    <property type="glycosylation" value="1 site, 1 O-linked glycan (1 site)"/>
</dbReference>
<dbReference type="iPTMnet" id="Q9BV86"/>
<dbReference type="MetOSite" id="Q9BV86"/>
<dbReference type="PhosphoSitePlus" id="Q9BV86"/>
<dbReference type="SwissPalm" id="Q9BV86"/>
<dbReference type="BioMuta" id="NTMT1"/>
<dbReference type="DMDM" id="74761281"/>
<dbReference type="jPOST" id="Q9BV86"/>
<dbReference type="MassIVE" id="Q9BV86"/>
<dbReference type="PaxDb" id="9606-ENSP00000483489"/>
<dbReference type="PeptideAtlas" id="Q9BV86"/>
<dbReference type="ProteomicsDB" id="79180">
    <molecule id="Q9BV86-1"/>
</dbReference>
<dbReference type="ProteomicsDB" id="79181">
    <molecule id="Q9BV86-2"/>
</dbReference>
<dbReference type="Pumba" id="Q9BV86"/>
<dbReference type="TopDownProteomics" id="Q9BV86-1">
    <molecule id="Q9BV86-1"/>
</dbReference>
<dbReference type="Antibodypedia" id="17874">
    <property type="antibodies" value="159 antibodies from 28 providers"/>
</dbReference>
<dbReference type="DNASU" id="28989"/>
<dbReference type="Ensembl" id="ENST00000372480.1">
    <molecule id="Q9BV86-1"/>
    <property type="protein sequence ID" value="ENSP00000361558.1"/>
    <property type="gene ID" value="ENSG00000148335.15"/>
</dbReference>
<dbReference type="Ensembl" id="ENST00000372481.7">
    <molecule id="Q9BV86-2"/>
    <property type="protein sequence ID" value="ENSP00000361559.3"/>
    <property type="gene ID" value="ENSG00000148335.15"/>
</dbReference>
<dbReference type="Ensembl" id="ENST00000372483.9">
    <molecule id="Q9BV86-1"/>
    <property type="protein sequence ID" value="ENSP00000361561.4"/>
    <property type="gene ID" value="ENSG00000148335.15"/>
</dbReference>
<dbReference type="Ensembl" id="ENST00000372486.5">
    <molecule id="Q9BV86-1"/>
    <property type="protein sequence ID" value="ENSP00000361564.1"/>
    <property type="gene ID" value="ENSG00000148335.15"/>
</dbReference>
<dbReference type="Ensembl" id="ENST00000611055.4">
    <molecule id="Q9BV86-1"/>
    <property type="protein sequence ID" value="ENSP00000483489.1"/>
    <property type="gene ID" value="ENSG00000148335.15"/>
</dbReference>
<dbReference type="Ensembl" id="ENST00000613644.4">
    <molecule id="Q9BV86-1"/>
    <property type="protein sequence ID" value="ENSP00000478521.1"/>
    <property type="gene ID" value="ENSG00000148335.15"/>
</dbReference>
<dbReference type="GeneID" id="28989"/>
<dbReference type="KEGG" id="hsa:28989"/>
<dbReference type="MANE-Select" id="ENST00000372483.9">
    <property type="protein sequence ID" value="ENSP00000361561.4"/>
    <property type="RefSeq nucleotide sequence ID" value="NM_014064.4"/>
    <property type="RefSeq protein sequence ID" value="NP_054783.2"/>
</dbReference>
<dbReference type="UCSC" id="uc004byd.3">
    <molecule id="Q9BV86-1"/>
    <property type="organism name" value="human"/>
</dbReference>
<dbReference type="AGR" id="HGNC:23373"/>
<dbReference type="CTD" id="28989"/>
<dbReference type="DisGeNET" id="28989"/>
<dbReference type="GeneCards" id="NTMT1"/>
<dbReference type="HGNC" id="HGNC:23373">
    <property type="gene designation" value="NTMT1"/>
</dbReference>
<dbReference type="HPA" id="ENSG00000148335">
    <property type="expression patterns" value="Low tissue specificity"/>
</dbReference>
<dbReference type="MIM" id="613560">
    <property type="type" value="gene"/>
</dbReference>
<dbReference type="neXtProt" id="NX_Q9BV86"/>
<dbReference type="OpenTargets" id="ENSG00000148335"/>
<dbReference type="PharmGKB" id="PA162395788"/>
<dbReference type="VEuPathDB" id="HostDB:ENSG00000148335"/>
<dbReference type="eggNOG" id="KOG3178">
    <property type="taxonomic scope" value="Eukaryota"/>
</dbReference>
<dbReference type="GeneTree" id="ENSGT00390000008371"/>
<dbReference type="HOGENOM" id="CLU_055356_3_1_1"/>
<dbReference type="InParanoid" id="Q9BV86"/>
<dbReference type="OMA" id="IKQCKQT"/>
<dbReference type="OrthoDB" id="1298661at2759"/>
<dbReference type="PAN-GO" id="Q9BV86">
    <property type="GO annotations" value="5 GO annotations based on evolutionary models"/>
</dbReference>
<dbReference type="PhylomeDB" id="Q9BV86"/>
<dbReference type="TreeFam" id="TF314174"/>
<dbReference type="BioCyc" id="MetaCyc:ENSG00000148335-MONOMER"/>
<dbReference type="BRENDA" id="2.1.1.244">
    <property type="organism ID" value="2681"/>
</dbReference>
<dbReference type="PathwayCommons" id="Q9BV86"/>
<dbReference type="SignaLink" id="Q9BV86"/>
<dbReference type="BioGRID-ORCS" id="28989">
    <property type="hits" value="19 hits in 1159 CRISPR screens"/>
</dbReference>
<dbReference type="CD-CODE" id="DEE660B4">
    <property type="entry name" value="Stress granule"/>
</dbReference>
<dbReference type="ChiTaRS" id="NTMT1">
    <property type="organism name" value="human"/>
</dbReference>
<dbReference type="EvolutionaryTrace" id="Q9BV86"/>
<dbReference type="GenomeRNAi" id="28989"/>
<dbReference type="Pharos" id="Q9BV86">
    <property type="development level" value="Tchem"/>
</dbReference>
<dbReference type="PRO" id="PR:Q9BV86"/>
<dbReference type="Proteomes" id="UP000005640">
    <property type="component" value="Chromosome 9"/>
</dbReference>
<dbReference type="RNAct" id="Q9BV86">
    <property type="molecule type" value="protein"/>
</dbReference>
<dbReference type="Bgee" id="ENSG00000148335">
    <property type="expression patterns" value="Expressed in left testis and 181 other cell types or tissues"/>
</dbReference>
<dbReference type="ExpressionAtlas" id="Q9BV86">
    <property type="expression patterns" value="baseline and differential"/>
</dbReference>
<dbReference type="GO" id="GO:0005737">
    <property type="term" value="C:cytoplasm"/>
    <property type="evidence" value="ECO:0000318"/>
    <property type="project" value="GO_Central"/>
</dbReference>
<dbReference type="GO" id="GO:0005829">
    <property type="term" value="C:cytosol"/>
    <property type="evidence" value="ECO:0000314"/>
    <property type="project" value="HPA"/>
</dbReference>
<dbReference type="GO" id="GO:0005654">
    <property type="term" value="C:nucleoplasm"/>
    <property type="evidence" value="ECO:0000314"/>
    <property type="project" value="HPA"/>
</dbReference>
<dbReference type="GO" id="GO:0005634">
    <property type="term" value="C:nucleus"/>
    <property type="evidence" value="ECO:0000314"/>
    <property type="project" value="UniProtKB"/>
</dbReference>
<dbReference type="GO" id="GO:0042054">
    <property type="term" value="F:histone methyltransferase activity"/>
    <property type="evidence" value="ECO:0000314"/>
    <property type="project" value="UniProtKB"/>
</dbReference>
<dbReference type="GO" id="GO:0071885">
    <property type="term" value="F:N-terminal protein N-methyltransferase activity"/>
    <property type="evidence" value="ECO:0000314"/>
    <property type="project" value="UniProtKB"/>
</dbReference>
<dbReference type="GO" id="GO:0008276">
    <property type="term" value="F:protein methyltransferase activity"/>
    <property type="evidence" value="ECO:0000314"/>
    <property type="project" value="UniProtKB"/>
</dbReference>
<dbReference type="GO" id="GO:0007059">
    <property type="term" value="P:chromosome segregation"/>
    <property type="evidence" value="ECO:0000315"/>
    <property type="project" value="UniProtKB"/>
</dbReference>
<dbReference type="GO" id="GO:0018013">
    <property type="term" value="P:N-terminal peptidyl-glycine methylation"/>
    <property type="evidence" value="ECO:0000314"/>
    <property type="project" value="UniProtKB"/>
</dbReference>
<dbReference type="GO" id="GO:0018016">
    <property type="term" value="P:N-terminal peptidyl-proline dimethylation"/>
    <property type="evidence" value="ECO:0000314"/>
    <property type="project" value="UniProtKB"/>
</dbReference>
<dbReference type="GO" id="GO:0035572">
    <property type="term" value="P:N-terminal peptidyl-serine dimethylation"/>
    <property type="evidence" value="ECO:0000314"/>
    <property type="project" value="UniProtKB"/>
</dbReference>
<dbReference type="GO" id="GO:0035573">
    <property type="term" value="P:N-terminal peptidyl-serine trimethylation"/>
    <property type="evidence" value="ECO:0000314"/>
    <property type="project" value="UniProtKB"/>
</dbReference>
<dbReference type="GO" id="GO:0007051">
    <property type="term" value="P:spindle organization"/>
    <property type="evidence" value="ECO:0000315"/>
    <property type="project" value="UniProtKB"/>
</dbReference>
<dbReference type="CDD" id="cd02440">
    <property type="entry name" value="AdoMet_MTases"/>
    <property type="match status" value="1"/>
</dbReference>
<dbReference type="FunFam" id="3.40.50.150:FF:000025">
    <property type="entry name" value="N-terminal Xaa-Pro-Lys N-methyltransferase 1"/>
    <property type="match status" value="1"/>
</dbReference>
<dbReference type="Gene3D" id="3.40.50.150">
    <property type="entry name" value="Vaccinia Virus protein VP39"/>
    <property type="match status" value="1"/>
</dbReference>
<dbReference type="InterPro" id="IPR008576">
    <property type="entry name" value="MeTrfase_NTM1"/>
</dbReference>
<dbReference type="InterPro" id="IPR029063">
    <property type="entry name" value="SAM-dependent_MTases_sf"/>
</dbReference>
<dbReference type="PANTHER" id="PTHR12753">
    <property type="entry name" value="AD-003 - RELATED"/>
    <property type="match status" value="1"/>
</dbReference>
<dbReference type="PANTHER" id="PTHR12753:SF1">
    <property type="entry name" value="N-TERMINAL XAA-PRO-LYS N-METHYLTRANSFERASE 1"/>
    <property type="match status" value="1"/>
</dbReference>
<dbReference type="Pfam" id="PF05891">
    <property type="entry name" value="Methyltransf_PK"/>
    <property type="match status" value="1"/>
</dbReference>
<dbReference type="PIRSF" id="PIRSF016958">
    <property type="entry name" value="DUF858_MeTrfase_lik"/>
    <property type="match status" value="1"/>
</dbReference>
<dbReference type="SUPFAM" id="SSF53335">
    <property type="entry name" value="S-adenosyl-L-methionine-dependent methyltransferases"/>
    <property type="match status" value="1"/>
</dbReference>
<accession>Q9BV86</accession>
<accession>A8K4J2</accession>
<accession>A8K8G7</accession>
<accession>Q5SZB9</accession>
<accession>Q9UI28</accession>
<gene>
    <name type="primary">NTMT1</name>
    <name type="synonym">C9orf32</name>
    <name type="synonym">METTL11A</name>
    <name type="synonym">NRMT</name>
    <name type="synonym">NRMT1</name>
    <name type="ORF">AD-003</name>
</gene>
<protein>
    <recommendedName>
        <fullName>N-terminal Xaa-Pro-Lys N-methyltransferase 1</fullName>
        <ecNumber evidence="2">2.1.1.244</ecNumber>
    </recommendedName>
    <alternativeName>
        <fullName>Alpha N-terminal protein methyltransferase 1A</fullName>
    </alternativeName>
    <alternativeName>
        <fullName>Methyltransferase-like protein 11A</fullName>
    </alternativeName>
    <alternativeName>
        <fullName>N-terminal RCC1 methyltransferase</fullName>
    </alternativeName>
    <alternativeName>
        <fullName>X-Pro-Lys N-terminal protein methyltransferase 1A</fullName>
        <shortName>NTM1A</shortName>
    </alternativeName>
    <component>
        <recommendedName>
            <fullName>N-terminal Xaa-Pro-Lys N-methyltransferase 1, N-terminally processed</fullName>
        </recommendedName>
    </component>
</protein>
<organism>
    <name type="scientific">Homo sapiens</name>
    <name type="common">Human</name>
    <dbReference type="NCBI Taxonomy" id="9606"/>
    <lineage>
        <taxon>Eukaryota</taxon>
        <taxon>Metazoa</taxon>
        <taxon>Chordata</taxon>
        <taxon>Craniata</taxon>
        <taxon>Vertebrata</taxon>
        <taxon>Euteleostomi</taxon>
        <taxon>Mammalia</taxon>
        <taxon>Eutheria</taxon>
        <taxon>Euarchontoglires</taxon>
        <taxon>Primates</taxon>
        <taxon>Haplorrhini</taxon>
        <taxon>Catarrhini</taxon>
        <taxon>Hominidae</taxon>
        <taxon>Homo</taxon>
    </lineage>
</organism>
<sequence>MTSEVIEDEKQFYSKAKTYWKQIPPTVDGMLGGYGHISSIDINSSRKFLQRFLREGPNKTGTSCALDCGAGIGRITKRLLLPLFREVDMVDITEDFLVQAKTYLGEEGKRVRNYFCCGLQDFTPEPDSYDVIWIQWVIGHLTDQHLAEFLRRCKGSLRPNGIIVIKDNMAQEGVILDDVDSSVCRDLDVVRRIICSAGLSLLAEERQENLPDEIYHVYSFALR</sequence>
<name>NTM1A_HUMAN</name>
<proteinExistence type="evidence at protein level"/>
<reference key="1">
    <citation type="journal article" date="2000" name="Proc. Natl. Acad. Sci. U.S.A.">
        <title>Gene expression profiling in the human hypothalamus-pituitary-adrenal axis and full-length cDNA cloning.</title>
        <authorList>
            <person name="Hu R.-M."/>
            <person name="Han Z.-G."/>
            <person name="Song H.-D."/>
            <person name="Peng Y.-D."/>
            <person name="Huang Q.-H."/>
            <person name="Ren S.-X."/>
            <person name="Gu Y.-J."/>
            <person name="Huang C.-H."/>
            <person name="Li Y.-B."/>
            <person name="Jiang C.-L."/>
            <person name="Fu G."/>
            <person name="Zhang Q.-H."/>
            <person name="Gu B.-W."/>
            <person name="Dai M."/>
            <person name="Mao Y.-F."/>
            <person name="Gao G.-F."/>
            <person name="Rong R."/>
            <person name="Ye M."/>
            <person name="Zhou J."/>
            <person name="Xu S.-H."/>
            <person name="Gu J."/>
            <person name="Shi J.-X."/>
            <person name="Jin W.-R."/>
            <person name="Zhang C.-K."/>
            <person name="Wu T.-M."/>
            <person name="Huang G.-Y."/>
            <person name="Chen Z."/>
            <person name="Chen M.-D."/>
            <person name="Chen J.-L."/>
        </authorList>
    </citation>
    <scope>NUCLEOTIDE SEQUENCE [LARGE SCALE MRNA] (ISOFORM 1)</scope>
    <source>
        <tissue>Adrenal gland</tissue>
    </source>
</reference>
<reference key="2">
    <citation type="journal article" date="2004" name="Nat. Genet.">
        <title>Complete sequencing and characterization of 21,243 full-length human cDNAs.</title>
        <authorList>
            <person name="Ota T."/>
            <person name="Suzuki Y."/>
            <person name="Nishikawa T."/>
            <person name="Otsuki T."/>
            <person name="Sugiyama T."/>
            <person name="Irie R."/>
            <person name="Wakamatsu A."/>
            <person name="Hayashi K."/>
            <person name="Sato H."/>
            <person name="Nagai K."/>
            <person name="Kimura K."/>
            <person name="Makita H."/>
            <person name="Sekine M."/>
            <person name="Obayashi M."/>
            <person name="Nishi T."/>
            <person name="Shibahara T."/>
            <person name="Tanaka T."/>
            <person name="Ishii S."/>
            <person name="Yamamoto J."/>
            <person name="Saito K."/>
            <person name="Kawai Y."/>
            <person name="Isono Y."/>
            <person name="Nakamura Y."/>
            <person name="Nagahari K."/>
            <person name="Murakami K."/>
            <person name="Yasuda T."/>
            <person name="Iwayanagi T."/>
            <person name="Wagatsuma M."/>
            <person name="Shiratori A."/>
            <person name="Sudo H."/>
            <person name="Hosoiri T."/>
            <person name="Kaku Y."/>
            <person name="Kodaira H."/>
            <person name="Kondo H."/>
            <person name="Sugawara M."/>
            <person name="Takahashi M."/>
            <person name="Kanda K."/>
            <person name="Yokoi T."/>
            <person name="Furuya T."/>
            <person name="Kikkawa E."/>
            <person name="Omura Y."/>
            <person name="Abe K."/>
            <person name="Kamihara K."/>
            <person name="Katsuta N."/>
            <person name="Sato K."/>
            <person name="Tanikawa M."/>
            <person name="Yamazaki M."/>
            <person name="Ninomiya K."/>
            <person name="Ishibashi T."/>
            <person name="Yamashita H."/>
            <person name="Murakawa K."/>
            <person name="Fujimori K."/>
            <person name="Tanai H."/>
            <person name="Kimata M."/>
            <person name="Watanabe M."/>
            <person name="Hiraoka S."/>
            <person name="Chiba Y."/>
            <person name="Ishida S."/>
            <person name="Ono Y."/>
            <person name="Takiguchi S."/>
            <person name="Watanabe S."/>
            <person name="Yosida M."/>
            <person name="Hotuta T."/>
            <person name="Kusano J."/>
            <person name="Kanehori K."/>
            <person name="Takahashi-Fujii A."/>
            <person name="Hara H."/>
            <person name="Tanase T.-O."/>
            <person name="Nomura Y."/>
            <person name="Togiya S."/>
            <person name="Komai F."/>
            <person name="Hara R."/>
            <person name="Takeuchi K."/>
            <person name="Arita M."/>
            <person name="Imose N."/>
            <person name="Musashino K."/>
            <person name="Yuuki H."/>
            <person name="Oshima A."/>
            <person name="Sasaki N."/>
            <person name="Aotsuka S."/>
            <person name="Yoshikawa Y."/>
            <person name="Matsunawa H."/>
            <person name="Ichihara T."/>
            <person name="Shiohata N."/>
            <person name="Sano S."/>
            <person name="Moriya S."/>
            <person name="Momiyama H."/>
            <person name="Satoh N."/>
            <person name="Takami S."/>
            <person name="Terashima Y."/>
            <person name="Suzuki O."/>
            <person name="Nakagawa S."/>
            <person name="Senoh A."/>
            <person name="Mizoguchi H."/>
            <person name="Goto Y."/>
            <person name="Shimizu F."/>
            <person name="Wakebe H."/>
            <person name="Hishigaki H."/>
            <person name="Watanabe T."/>
            <person name="Sugiyama A."/>
            <person name="Takemoto M."/>
            <person name="Kawakami B."/>
            <person name="Yamazaki M."/>
            <person name="Watanabe K."/>
            <person name="Kumagai A."/>
            <person name="Itakura S."/>
            <person name="Fukuzumi Y."/>
            <person name="Fujimori Y."/>
            <person name="Komiyama M."/>
            <person name="Tashiro H."/>
            <person name="Tanigami A."/>
            <person name="Fujiwara T."/>
            <person name="Ono T."/>
            <person name="Yamada K."/>
            <person name="Fujii Y."/>
            <person name="Ozaki K."/>
            <person name="Hirao M."/>
            <person name="Ohmori Y."/>
            <person name="Kawabata A."/>
            <person name="Hikiji T."/>
            <person name="Kobatake N."/>
            <person name="Inagaki H."/>
            <person name="Ikema Y."/>
            <person name="Okamoto S."/>
            <person name="Okitani R."/>
            <person name="Kawakami T."/>
            <person name="Noguchi S."/>
            <person name="Itoh T."/>
            <person name="Shigeta K."/>
            <person name="Senba T."/>
            <person name="Matsumura K."/>
            <person name="Nakajima Y."/>
            <person name="Mizuno T."/>
            <person name="Morinaga M."/>
            <person name="Sasaki M."/>
            <person name="Togashi T."/>
            <person name="Oyama M."/>
            <person name="Hata H."/>
            <person name="Watanabe M."/>
            <person name="Komatsu T."/>
            <person name="Mizushima-Sugano J."/>
            <person name="Satoh T."/>
            <person name="Shirai Y."/>
            <person name="Takahashi Y."/>
            <person name="Nakagawa K."/>
            <person name="Okumura K."/>
            <person name="Nagase T."/>
            <person name="Nomura N."/>
            <person name="Kikuchi H."/>
            <person name="Masuho Y."/>
            <person name="Yamashita R."/>
            <person name="Nakai K."/>
            <person name="Yada T."/>
            <person name="Nakamura Y."/>
            <person name="Ohara O."/>
            <person name="Isogai T."/>
            <person name="Sugano S."/>
        </authorList>
    </citation>
    <scope>NUCLEOTIDE SEQUENCE [LARGE SCALE MRNA] (ISOFORMS 1 AND 2)</scope>
    <source>
        <tissue>Teratocarcinoma</tissue>
        <tissue>Testis</tissue>
    </source>
</reference>
<reference key="3">
    <citation type="journal article" date="2004" name="Nature">
        <title>DNA sequence and analysis of human chromosome 9.</title>
        <authorList>
            <person name="Humphray S.J."/>
            <person name="Oliver K."/>
            <person name="Hunt A.R."/>
            <person name="Plumb R.W."/>
            <person name="Loveland J.E."/>
            <person name="Howe K.L."/>
            <person name="Andrews T.D."/>
            <person name="Searle S."/>
            <person name="Hunt S.E."/>
            <person name="Scott C.E."/>
            <person name="Jones M.C."/>
            <person name="Ainscough R."/>
            <person name="Almeida J.P."/>
            <person name="Ambrose K.D."/>
            <person name="Ashwell R.I.S."/>
            <person name="Babbage A.K."/>
            <person name="Babbage S."/>
            <person name="Bagguley C.L."/>
            <person name="Bailey J."/>
            <person name="Banerjee R."/>
            <person name="Barker D.J."/>
            <person name="Barlow K.F."/>
            <person name="Bates K."/>
            <person name="Beasley H."/>
            <person name="Beasley O."/>
            <person name="Bird C.P."/>
            <person name="Bray-Allen S."/>
            <person name="Brown A.J."/>
            <person name="Brown J.Y."/>
            <person name="Burford D."/>
            <person name="Burrill W."/>
            <person name="Burton J."/>
            <person name="Carder C."/>
            <person name="Carter N.P."/>
            <person name="Chapman J.C."/>
            <person name="Chen Y."/>
            <person name="Clarke G."/>
            <person name="Clark S.Y."/>
            <person name="Clee C.M."/>
            <person name="Clegg S."/>
            <person name="Collier R.E."/>
            <person name="Corby N."/>
            <person name="Crosier M."/>
            <person name="Cummings A.T."/>
            <person name="Davies J."/>
            <person name="Dhami P."/>
            <person name="Dunn M."/>
            <person name="Dutta I."/>
            <person name="Dyer L.W."/>
            <person name="Earthrowl M.E."/>
            <person name="Faulkner L."/>
            <person name="Fleming C.J."/>
            <person name="Frankish A."/>
            <person name="Frankland J.A."/>
            <person name="French L."/>
            <person name="Fricker D.G."/>
            <person name="Garner P."/>
            <person name="Garnett J."/>
            <person name="Ghori J."/>
            <person name="Gilbert J.G.R."/>
            <person name="Glison C."/>
            <person name="Grafham D.V."/>
            <person name="Gribble S."/>
            <person name="Griffiths C."/>
            <person name="Griffiths-Jones S."/>
            <person name="Grocock R."/>
            <person name="Guy J."/>
            <person name="Hall R.E."/>
            <person name="Hammond S."/>
            <person name="Harley J.L."/>
            <person name="Harrison E.S.I."/>
            <person name="Hart E.A."/>
            <person name="Heath P.D."/>
            <person name="Henderson C.D."/>
            <person name="Hopkins B.L."/>
            <person name="Howard P.J."/>
            <person name="Howden P.J."/>
            <person name="Huckle E."/>
            <person name="Johnson C."/>
            <person name="Johnson D."/>
            <person name="Joy A.A."/>
            <person name="Kay M."/>
            <person name="Keenan S."/>
            <person name="Kershaw J.K."/>
            <person name="Kimberley A.M."/>
            <person name="King A."/>
            <person name="Knights A."/>
            <person name="Laird G.K."/>
            <person name="Langford C."/>
            <person name="Lawlor S."/>
            <person name="Leongamornlert D.A."/>
            <person name="Leversha M."/>
            <person name="Lloyd C."/>
            <person name="Lloyd D.M."/>
            <person name="Lovell J."/>
            <person name="Martin S."/>
            <person name="Mashreghi-Mohammadi M."/>
            <person name="Matthews L."/>
            <person name="McLaren S."/>
            <person name="McLay K.E."/>
            <person name="McMurray A."/>
            <person name="Milne S."/>
            <person name="Nickerson T."/>
            <person name="Nisbett J."/>
            <person name="Nordsiek G."/>
            <person name="Pearce A.V."/>
            <person name="Peck A.I."/>
            <person name="Porter K.M."/>
            <person name="Pandian R."/>
            <person name="Pelan S."/>
            <person name="Phillimore B."/>
            <person name="Povey S."/>
            <person name="Ramsey Y."/>
            <person name="Rand V."/>
            <person name="Scharfe M."/>
            <person name="Sehra H.K."/>
            <person name="Shownkeen R."/>
            <person name="Sims S.K."/>
            <person name="Skuce C.D."/>
            <person name="Smith M."/>
            <person name="Steward C.A."/>
            <person name="Swarbreck D."/>
            <person name="Sycamore N."/>
            <person name="Tester J."/>
            <person name="Thorpe A."/>
            <person name="Tracey A."/>
            <person name="Tromans A."/>
            <person name="Thomas D.W."/>
            <person name="Wall M."/>
            <person name="Wallis J.M."/>
            <person name="West A.P."/>
            <person name="Whitehead S.L."/>
            <person name="Willey D.L."/>
            <person name="Williams S.A."/>
            <person name="Wilming L."/>
            <person name="Wray P.W."/>
            <person name="Young L."/>
            <person name="Ashurst J.L."/>
            <person name="Coulson A."/>
            <person name="Blocker H."/>
            <person name="Durbin R.M."/>
            <person name="Sulston J.E."/>
            <person name="Hubbard T."/>
            <person name="Jackson M.J."/>
            <person name="Bentley D.R."/>
            <person name="Beck S."/>
            <person name="Rogers J."/>
            <person name="Dunham I."/>
        </authorList>
    </citation>
    <scope>NUCLEOTIDE SEQUENCE [LARGE SCALE GENOMIC DNA]</scope>
</reference>
<reference key="4">
    <citation type="journal article" date="2004" name="Genome Res.">
        <title>The status, quality, and expansion of the NIH full-length cDNA project: the Mammalian Gene Collection (MGC).</title>
        <authorList>
            <consortium name="The MGC Project Team"/>
        </authorList>
    </citation>
    <scope>NUCLEOTIDE SEQUENCE [LARGE SCALE MRNA] (ISOFORM 1)</scope>
    <source>
        <tissue>Brain</tissue>
        <tissue>Skin</tissue>
    </source>
</reference>
<reference key="5">
    <citation type="submission" date="2004-10" db="UniProtKB">
        <authorList>
            <person name="Bienvenut W.V."/>
        </authorList>
    </citation>
    <scope>PROTEIN SEQUENCE OF 2-15 AND 79-85</scope>
    <scope>CLEAVAGE OF INITIATOR METHIONINE</scope>
    <scope>ACETYLATION AT THR-2</scope>
    <scope>IDENTIFICATION BY MASS SPECTROMETRY</scope>
    <source>
        <tissue>B-cell lymphoma</tissue>
    </source>
</reference>
<reference key="6">
    <citation type="journal article" date="2009" name="Anal. Chem.">
        <title>Lys-N and trypsin cover complementary parts of the phosphoproteome in a refined SCX-based approach.</title>
        <authorList>
            <person name="Gauci S."/>
            <person name="Helbig A.O."/>
            <person name="Slijper M."/>
            <person name="Krijgsveld J."/>
            <person name="Heck A.J."/>
            <person name="Mohammed S."/>
        </authorList>
    </citation>
    <scope>ACETYLATION [LARGE SCALE ANALYSIS] AT MET-1 AND THR-2</scope>
    <scope>CLEAVAGE OF INITIATOR METHIONINE [LARGE SCALE ANALYSIS]</scope>
    <scope>IDENTIFICATION BY MASS SPECTROMETRY [LARGE SCALE ANALYSIS]</scope>
</reference>
<reference key="7">
    <citation type="journal article" date="2010" name="Biochemistry">
        <title>Identification of protein N-terminal methyltransferases in yeast and humans.</title>
        <authorList>
            <person name="Webb K.J."/>
            <person name="Lipson R.S."/>
            <person name="Al-Hadid Q."/>
            <person name="Whitelegge J.P."/>
            <person name="Clarke S.G."/>
        </authorList>
    </citation>
    <scope>FUNCTION</scope>
</reference>
<reference key="8">
    <citation type="journal article" date="2010" name="Nature">
        <title>NRMT is an alpha-N-methyltransferase that methylates RCC1 and retinoblastoma protein.</title>
        <authorList>
            <person name="Tooley C.E."/>
            <person name="Petkowski J.J."/>
            <person name="Muratore-Schroeder T.L."/>
            <person name="Balsbaugh J.L."/>
            <person name="Shabanowitz J."/>
            <person name="Sabat M."/>
            <person name="Minor W."/>
            <person name="Hunt D.F."/>
            <person name="Macara I.G."/>
        </authorList>
    </citation>
    <scope>FUNCTION</scope>
    <scope>CATALYTIC ACTIVITY</scope>
    <scope>IDENTIFICATION BY MASS SPECTROMETRY</scope>
    <scope>SUBCELLULAR LOCATION</scope>
    <scope>S-ADENOSYL-L-METHIONINE-BINDING</scope>
    <scope>MUTAGENESIS OF ASP-167; ASN-168; ASP-177; ASP-180 AND SER-182</scope>
</reference>
<reference key="9">
    <citation type="journal article" date="2011" name="BMC Syst. Biol.">
        <title>Initial characterization of the human central proteome.</title>
        <authorList>
            <person name="Burkard T.R."/>
            <person name="Planyavsky M."/>
            <person name="Kaupe I."/>
            <person name="Breitwieser F.P."/>
            <person name="Buerckstuemmer T."/>
            <person name="Bennett K.L."/>
            <person name="Superti-Furga G."/>
            <person name="Colinge J."/>
        </authorList>
    </citation>
    <scope>IDENTIFICATION BY MASS SPECTROMETRY [LARGE SCALE ANALYSIS]</scope>
</reference>
<reference key="10">
    <citation type="journal article" date="2012" name="Mol. Cell. Proteomics">
        <title>Comparative large-scale characterisation of plant vs. mammal proteins reveals similar and idiosyncratic N-alpha acetylation features.</title>
        <authorList>
            <person name="Bienvenut W.V."/>
            <person name="Sumpton D."/>
            <person name="Martinez A."/>
            <person name="Lilla S."/>
            <person name="Espagne C."/>
            <person name="Meinnel T."/>
            <person name="Giglione C."/>
        </authorList>
    </citation>
    <scope>ACETYLATION [LARGE SCALE ANALYSIS] AT THR-2</scope>
    <scope>CLEAVAGE OF INITIATOR METHIONINE [LARGE SCALE ANALYSIS]</scope>
    <scope>IDENTIFICATION BY MASS SPECTROMETRY [LARGE SCALE ANALYSIS]</scope>
</reference>
<reference key="11">
    <citation type="journal article" date="2013" name="Biochem. J.">
        <title>NRMT2 is an N-terminal monomethylase that primes for its homologue NRMT1.</title>
        <authorList>
            <person name="Petkowski J.J."/>
            <person name="Bonsignore L.A."/>
            <person name="Tooley J.G."/>
            <person name="Wilkey D.W."/>
            <person name="Merchant M.L."/>
            <person name="Macara I.G."/>
            <person name="Schaner Tooley C.E."/>
        </authorList>
    </citation>
    <scope>FUNCTION</scope>
    <scope>SUBCELLULAR LOCATION</scope>
</reference>
<reference key="12">
    <citation type="submission" date="2009-02" db="PDB data bank">
        <title>The crystal structure of human AD-003 protein in complex with S-adenosyl-L-homocysteine.</title>
        <authorList>
            <consortium name="Structural genomics consortium (SGC)"/>
        </authorList>
    </citation>
    <scope>X-RAY CRYSTALLOGRAPHY (1.75 ANGSTROMS) OF 2-223 IN COMPLEX WITH S-ADENOSYL-L-HOMOCYSTEINE</scope>
</reference>
<reference evidence="10" key="13">
    <citation type="journal article" date="2015" name="Genes Dev.">
        <title>Molecular basis for histone N-terminal methylation by NRMT1.</title>
        <authorList>
            <person name="Wu R."/>
            <person name="Yue Y."/>
            <person name="Zheng X."/>
            <person name="Li H."/>
        </authorList>
    </citation>
    <scope>X-RAY CRYSTALLOGRAPHY (1.30 ANGSTROMS) IN COMPLEXES WITH CENPA; HISTONE H2B AND S-ADENOSYL-HOMOCYSTEINE</scope>
    <scope>FUNCTION</scope>
    <scope>CATALYTIC ACTIVITY</scope>
    <scope>MUTAGENESIS OF TYR-19; TRP-20; TRP-136; ASP-167; ASN-168; ASP-177 AND ASP-180</scope>
</reference>
<reference evidence="12 13 14 15 16 17" key="14">
    <citation type="journal article" date="2015" name="Genes Dev.">
        <title>Structural basis for substrate recognition by the human N-terminal methyltransferase 1.</title>
        <authorList>
            <person name="Dong C."/>
            <person name="Mao Y."/>
            <person name="Tempel W."/>
            <person name="Qin S."/>
            <person name="Li L."/>
            <person name="Loppnau P."/>
            <person name="Huang R."/>
            <person name="Min J."/>
        </authorList>
    </citation>
    <scope>X-RAY CRYSTALLOGRAPHY (1.45 ANGSTROMS) IN COMPLEXES WITH PEPTIDE SUBSTRATES AND S-ADENOSYL-HOMOCYSTEINE</scope>
</reference>
<keyword id="KW-0002">3D-structure</keyword>
<keyword id="KW-0007">Acetylation</keyword>
<keyword id="KW-0025">Alternative splicing</keyword>
<keyword id="KW-0903">Direct protein sequencing</keyword>
<keyword id="KW-0489">Methyltransferase</keyword>
<keyword id="KW-0539">Nucleus</keyword>
<keyword id="KW-1267">Proteomics identification</keyword>
<keyword id="KW-1185">Reference proteome</keyword>
<keyword id="KW-0949">S-adenosyl-L-methionine</keyword>
<keyword id="KW-0808">Transferase</keyword>
<feature type="chain" id="PRO_0000423228" description="N-terminal Xaa-Pro-Lys N-methyltransferase 1">
    <location>
        <begin position="1"/>
        <end position="223"/>
    </location>
</feature>
<feature type="initiator methionine" description="Removed; alternate" evidence="6 18 19">
    <location>
        <position position="1"/>
    </location>
</feature>
<feature type="chain" id="PRO_0000119288" description="N-terminal Xaa-Pro-Lys N-methyltransferase 1, N-terminally processed">
    <location>
        <begin position="2"/>
        <end position="223"/>
    </location>
</feature>
<feature type="binding site" evidence="4 5 9 10 11 13 14 15 16 17">
    <location>
        <position position="69"/>
    </location>
    <ligand>
        <name>S-adenosyl-L-methionine</name>
        <dbReference type="ChEBI" id="CHEBI:59789"/>
    </ligand>
</feature>
<feature type="binding site" evidence="4 5 9 10 11 13 14 15 16 17">
    <location>
        <position position="74"/>
    </location>
    <ligand>
        <name>S-adenosyl-L-methionine</name>
        <dbReference type="ChEBI" id="CHEBI:59789"/>
    </ligand>
</feature>
<feature type="binding site" evidence="4 5 9 10 11 13 14 15 16 17">
    <location>
        <begin position="91"/>
        <end position="93"/>
    </location>
    <ligand>
        <name>S-adenosyl-L-methionine</name>
        <dbReference type="ChEBI" id="CHEBI:59789"/>
    </ligand>
</feature>
<feature type="binding site" evidence="4 5 9 10 11 13 14 15 16 17">
    <location>
        <begin position="119"/>
        <end position="120"/>
    </location>
    <ligand>
        <name>S-adenosyl-L-methionine</name>
        <dbReference type="ChEBI" id="CHEBI:59789"/>
    </ligand>
</feature>
<feature type="binding site" evidence="4 5 9 10 11 13 14 15 16 17">
    <location>
        <position position="135"/>
    </location>
    <ligand>
        <name>S-adenosyl-L-methionine</name>
        <dbReference type="ChEBI" id="CHEBI:59789"/>
    </ligand>
</feature>
<feature type="modified residue" description="N-acetylmethionine" evidence="18">
    <location>
        <position position="1"/>
    </location>
</feature>
<feature type="modified residue" description="N-acetylthreonine; in N-terminal Xaa-Pro-Lys N-methyltransferase 1, N-terminally processed" evidence="6 18 19">
    <location>
        <position position="2"/>
    </location>
</feature>
<feature type="splice variant" id="VSP_039886" description="In isoform 2." evidence="7">
    <original>VRNYFCCGLQDFTPEPDSYDVIWIQWVIGHLTDQHLAEFLRRCKGSLRPNGIIVIKDNMAQEGVILDDVDSSVCRDLDVVRRIICSAGLSLLAEERQENLPDEIYHVYSFALR</original>
    <variation>ATSPISTWPSSCGAARAASAPTASSSSKTTWPRRA</variation>
    <location>
        <begin position="111"/>
        <end position="223"/>
    </location>
</feature>
<feature type="mutagenesis site" description="Decreased methyltransferase activity with CENPA." evidence="4">
    <original>Y</original>
    <variation>A</variation>
    <variation>F</variation>
    <location>
        <position position="19"/>
    </location>
</feature>
<feature type="mutagenesis site" description="Reduced methyltransferase activity with CENPA." evidence="4">
    <original>Y</original>
    <variation>A</variation>
    <location>
        <position position="19"/>
    </location>
</feature>
<feature type="mutagenesis site" description="Nearly abolishes methyltransferase activity with CENPA." evidence="4">
    <original>W</original>
    <variation>A</variation>
    <variation>M</variation>
    <variation>Y</variation>
    <location>
        <position position="20"/>
    </location>
</feature>
<feature type="mutagenesis site" description="Strongly reduces methyltransferase activity with CENPA." evidence="4">
    <original>W</original>
    <variation>L</variation>
    <location>
        <position position="136"/>
    </location>
</feature>
<feature type="mutagenesis site" description="Does not affect methyltransferase activity." evidence="2">
    <original>D</original>
    <variation>A</variation>
    <location>
        <position position="167"/>
    </location>
</feature>
<feature type="mutagenesis site" description="Abolishes methyltransferase activity with CENPA." evidence="4">
    <original>D</original>
    <variation>N</variation>
    <variation>Q</variation>
    <location>
        <position position="167"/>
    </location>
</feature>
<feature type="mutagenesis site" description="Decreased methyltransferase activity." evidence="2 4">
    <original>N</original>
    <variation>A</variation>
    <location>
        <position position="168"/>
    </location>
</feature>
<feature type="mutagenesis site" description="Loss of methyltransferase activity." evidence="2">
    <original>N</original>
    <variation>K</variation>
    <location>
        <position position="168"/>
    </location>
</feature>
<feature type="mutagenesis site" description="Induces a slight decrease in methyltransferase activity." evidence="2">
    <original>D</original>
    <variation>A</variation>
    <location>
        <position position="177"/>
    </location>
</feature>
<feature type="mutagenesis site" description="Induces a strong decrease in methyltransferase activity." evidence="2">
    <original>D</original>
    <variation>K</variation>
    <location>
        <position position="177"/>
    </location>
</feature>
<feature type="mutagenesis site" description="Strongly reduces methyltransferase activity with CENPA." evidence="4">
    <original>D</original>
    <variation>N</variation>
    <location>
        <position position="177"/>
    </location>
</feature>
<feature type="mutagenesis site" description="Induces a decrease in methyltransferase activity." evidence="2">
    <original>D</original>
    <variation>A</variation>
    <location>
        <position position="180"/>
    </location>
</feature>
<feature type="mutagenesis site" description="Induces a strong decrease in methyltransferase activity." evidence="2">
    <original>D</original>
    <variation>K</variation>
    <location>
        <position position="180"/>
    </location>
</feature>
<feature type="mutagenesis site" description="Reduced methyltransferase activity with CENPA." evidence="4">
    <original>D</original>
    <variation>N</variation>
    <location>
        <position position="180"/>
    </location>
</feature>
<feature type="mutagenesis site" description="Induces a slight decrease in methyltransferase activity." evidence="2">
    <original>S</original>
    <variation>A</variation>
    <location>
        <position position="182"/>
    </location>
</feature>
<feature type="mutagenesis site" description="Induces a strong decrease in methyltransferase activity." evidence="2">
    <original>S</original>
    <variation>K</variation>
    <location>
        <position position="182"/>
    </location>
</feature>
<feature type="sequence conflict" description="In Ref. 2; BAF85021." evidence="8" ref="2">
    <original>P</original>
    <variation>L</variation>
    <location>
        <position position="25"/>
    </location>
</feature>
<feature type="sequence conflict" description="In Ref. 1; AAF14859." evidence="8" ref="1">
    <original>S</original>
    <variation>SS</variation>
    <location>
        <position position="39"/>
    </location>
</feature>
<feature type="sequence conflict" description="In Ref. 2; BAF83646." evidence="8" ref="2">
    <original>V</original>
    <variation>A</variation>
    <location>
        <position position="131"/>
    </location>
</feature>
<feature type="helix" evidence="20">
    <location>
        <begin position="2"/>
        <end position="4"/>
    </location>
</feature>
<feature type="helix" evidence="20">
    <location>
        <begin position="9"/>
        <end position="21"/>
    </location>
</feature>
<feature type="helix" evidence="20">
    <location>
        <begin position="27"/>
        <end position="30"/>
    </location>
</feature>
<feature type="turn" evidence="20">
    <location>
        <begin position="31"/>
        <end position="33"/>
    </location>
</feature>
<feature type="helix" evidence="20">
    <location>
        <begin position="35"/>
        <end position="37"/>
    </location>
</feature>
<feature type="helix" evidence="20">
    <location>
        <begin position="38"/>
        <end position="54"/>
    </location>
</feature>
<feature type="strand" evidence="20">
    <location>
        <begin position="55"/>
        <end position="58"/>
    </location>
</feature>
<feature type="strand" evidence="20">
    <location>
        <begin position="63"/>
        <end position="68"/>
    </location>
</feature>
<feature type="turn" evidence="20">
    <location>
        <begin position="71"/>
        <end position="73"/>
    </location>
</feature>
<feature type="helix" evidence="20">
    <location>
        <begin position="74"/>
        <end position="78"/>
    </location>
</feature>
<feature type="turn" evidence="20">
    <location>
        <begin position="79"/>
        <end position="83"/>
    </location>
</feature>
<feature type="strand" evidence="20">
    <location>
        <begin position="85"/>
        <end position="92"/>
    </location>
</feature>
<feature type="helix" evidence="20">
    <location>
        <begin position="94"/>
        <end position="103"/>
    </location>
</feature>
<feature type="helix" evidence="20">
    <location>
        <begin position="105"/>
        <end position="110"/>
    </location>
</feature>
<feature type="strand" evidence="20">
    <location>
        <begin position="111"/>
        <end position="116"/>
    </location>
</feature>
<feature type="helix" evidence="20">
    <location>
        <begin position="119"/>
        <end position="121"/>
    </location>
</feature>
<feature type="strand" evidence="20">
    <location>
        <begin position="129"/>
        <end position="136"/>
    </location>
</feature>
<feature type="helix" evidence="20">
    <location>
        <begin position="138"/>
        <end position="140"/>
    </location>
</feature>
<feature type="helix" evidence="20">
    <location>
        <begin position="143"/>
        <end position="156"/>
    </location>
</feature>
<feature type="strand" evidence="20">
    <location>
        <begin position="157"/>
        <end position="177"/>
    </location>
</feature>
<feature type="turn" evidence="20">
    <location>
        <begin position="178"/>
        <end position="181"/>
    </location>
</feature>
<feature type="strand" evidence="20">
    <location>
        <begin position="182"/>
        <end position="186"/>
    </location>
</feature>
<feature type="helix" evidence="20">
    <location>
        <begin position="187"/>
        <end position="196"/>
    </location>
</feature>
<feature type="strand" evidence="20">
    <location>
        <begin position="200"/>
        <end position="206"/>
    </location>
</feature>
<feature type="strand" evidence="20">
    <location>
        <begin position="216"/>
        <end position="223"/>
    </location>
</feature>
<evidence type="ECO:0000269" key="1">
    <source>
    </source>
</evidence>
<evidence type="ECO:0000269" key="2">
    <source>
    </source>
</evidence>
<evidence type="ECO:0000269" key="3">
    <source>
    </source>
</evidence>
<evidence type="ECO:0000269" key="4">
    <source>
    </source>
</evidence>
<evidence type="ECO:0000269" key="5">
    <source>
    </source>
</evidence>
<evidence type="ECO:0000269" key="6">
    <source ref="5"/>
</evidence>
<evidence type="ECO:0000303" key="7">
    <source>
    </source>
</evidence>
<evidence type="ECO:0000305" key="8"/>
<evidence type="ECO:0007744" key="9">
    <source>
        <dbReference type="PDB" id="2EX4"/>
    </source>
</evidence>
<evidence type="ECO:0007744" key="10">
    <source>
        <dbReference type="PDB" id="5CVD"/>
    </source>
</evidence>
<evidence type="ECO:0007744" key="11">
    <source>
        <dbReference type="PDB" id="5CVE"/>
    </source>
</evidence>
<evidence type="ECO:0007744" key="12">
    <source>
        <dbReference type="PDB" id="5E1B"/>
    </source>
</evidence>
<evidence type="ECO:0007744" key="13">
    <source>
        <dbReference type="PDB" id="5E1D"/>
    </source>
</evidence>
<evidence type="ECO:0007744" key="14">
    <source>
        <dbReference type="PDB" id="5E1M"/>
    </source>
</evidence>
<evidence type="ECO:0007744" key="15">
    <source>
        <dbReference type="PDB" id="5E1O"/>
    </source>
</evidence>
<evidence type="ECO:0007744" key="16">
    <source>
        <dbReference type="PDB" id="5E2A"/>
    </source>
</evidence>
<evidence type="ECO:0007744" key="17">
    <source>
        <dbReference type="PDB" id="5E2B"/>
    </source>
</evidence>
<evidence type="ECO:0007744" key="18">
    <source>
    </source>
</evidence>
<evidence type="ECO:0007744" key="19">
    <source>
    </source>
</evidence>
<evidence type="ECO:0007829" key="20">
    <source>
        <dbReference type="PDB" id="5CVD"/>
    </source>
</evidence>